<protein>
    <recommendedName>
        <fullName>Uncharacterized 44.4 kDa protein in transposon Tn4556</fullName>
    </recommendedName>
</protein>
<feature type="chain" id="PRO_0000066519" description="Uncharacterized 44.4 kDa protein in transposon Tn4556">
    <location>
        <begin position="1"/>
        <end position="395"/>
    </location>
</feature>
<feature type="region of interest" description="Disordered" evidence="1">
    <location>
        <begin position="185"/>
        <end position="282"/>
    </location>
</feature>
<feature type="region of interest" description="Disordered" evidence="1">
    <location>
        <begin position="316"/>
        <end position="372"/>
    </location>
</feature>
<feature type="compositionally biased region" description="Basic residues" evidence="1">
    <location>
        <begin position="248"/>
        <end position="257"/>
    </location>
</feature>
<feature type="compositionally biased region" description="Low complexity" evidence="1">
    <location>
        <begin position="342"/>
        <end position="360"/>
    </location>
</feature>
<name>YT44_STRFR</name>
<proteinExistence type="predicted"/>
<evidence type="ECO:0000256" key="1">
    <source>
        <dbReference type="SAM" id="MobiDB-lite"/>
    </source>
</evidence>
<organism>
    <name type="scientific">Streptomyces fradiae</name>
    <name type="common">Streptomyces roseoflavus</name>
    <dbReference type="NCBI Taxonomy" id="1906"/>
    <lineage>
        <taxon>Bacteria</taxon>
        <taxon>Bacillati</taxon>
        <taxon>Actinomycetota</taxon>
        <taxon>Actinomycetes</taxon>
        <taxon>Kitasatosporales</taxon>
        <taxon>Streptomycetaceae</taxon>
        <taxon>Streptomyces</taxon>
    </lineage>
</organism>
<sequence>MRRRQDQAPPRAGEQVRVDLGRANLLAAHQLRQRQQRAQYGLTLRGGVEVHHADQQLQERADGAEPVDQHGPPCLVGIRVQRRGQLEQRGDRRGQLVPGHHLLDGRPHPFQALHFRRRDLPGVGVDLLARGVEHDLERGRQLRRRPLHARQRLQLLLRALALRPGQQLRRDQHLQQVQRVVHRPRREVHGGGQQRRQAASVGVPAQQRRLAVHPVPGQLRQPARRYPRHINGAHSERGDLLRPLQRPLHLRTRHPHRPAPQPVQLRDPLPGRHRPAKESSTARCPVLSIPCRLSHSRWFAASRTEATSLVSVVTPGSSTRRSLSHPAAASNNAFGPSPVVQARASTHSRSSPSASANSRYSKTRRSSRTCSSRVFSRSPYSFSTDGSPMSSCSAR</sequence>
<dbReference type="EMBL" id="M29297">
    <property type="protein sequence ID" value="AAA88562.1"/>
    <property type="molecule type" value="Genomic_DNA"/>
</dbReference>
<dbReference type="PIR" id="JQ0430">
    <property type="entry name" value="JQ0430"/>
</dbReference>
<keyword id="KW-0814">Transposable element</keyword>
<accession>P20188</accession>
<reference key="1">
    <citation type="journal article" date="1990" name="Gene">
        <title>Nucleotide sequence of Streptomyces fradiae transposable element Tn4556: a class-II transposon related to Tn3.</title>
        <authorList>
            <person name="Siemieniak D.R."/>
            <person name="Slightom J.L."/>
            <person name="Chung S.T."/>
        </authorList>
    </citation>
    <scope>NUCLEOTIDE SEQUENCE [GENOMIC DNA]</scope>
    <source>
        <transposon>Tn4556</transposon>
    </source>
</reference>